<reference key="1">
    <citation type="journal article" date="1999" name="Nature">
        <title>Sequence and analysis of chromosome 4 of the plant Arabidopsis thaliana.</title>
        <authorList>
            <person name="Mayer K.F.X."/>
            <person name="Schueller C."/>
            <person name="Wambutt R."/>
            <person name="Murphy G."/>
            <person name="Volckaert G."/>
            <person name="Pohl T."/>
            <person name="Duesterhoeft A."/>
            <person name="Stiekema W."/>
            <person name="Entian K.-D."/>
            <person name="Terryn N."/>
            <person name="Harris B."/>
            <person name="Ansorge W."/>
            <person name="Brandt P."/>
            <person name="Grivell L.A."/>
            <person name="Rieger M."/>
            <person name="Weichselgartner M."/>
            <person name="de Simone V."/>
            <person name="Obermaier B."/>
            <person name="Mache R."/>
            <person name="Mueller M."/>
            <person name="Kreis M."/>
            <person name="Delseny M."/>
            <person name="Puigdomenech P."/>
            <person name="Watson M."/>
            <person name="Schmidtheini T."/>
            <person name="Reichert B."/>
            <person name="Portetelle D."/>
            <person name="Perez-Alonso M."/>
            <person name="Boutry M."/>
            <person name="Bancroft I."/>
            <person name="Vos P."/>
            <person name="Hoheisel J."/>
            <person name="Zimmermann W."/>
            <person name="Wedler H."/>
            <person name="Ridley P."/>
            <person name="Langham S.-A."/>
            <person name="McCullagh B."/>
            <person name="Bilham L."/>
            <person name="Robben J."/>
            <person name="van der Schueren J."/>
            <person name="Grymonprez B."/>
            <person name="Chuang Y.-J."/>
            <person name="Vandenbussche F."/>
            <person name="Braeken M."/>
            <person name="Weltjens I."/>
            <person name="Voet M."/>
            <person name="Bastiaens I."/>
            <person name="Aert R."/>
            <person name="Defoor E."/>
            <person name="Weitzenegger T."/>
            <person name="Bothe G."/>
            <person name="Ramsperger U."/>
            <person name="Hilbert H."/>
            <person name="Braun M."/>
            <person name="Holzer E."/>
            <person name="Brandt A."/>
            <person name="Peters S."/>
            <person name="van Staveren M."/>
            <person name="Dirkse W."/>
            <person name="Mooijman P."/>
            <person name="Klein Lankhorst R."/>
            <person name="Rose M."/>
            <person name="Hauf J."/>
            <person name="Koetter P."/>
            <person name="Berneiser S."/>
            <person name="Hempel S."/>
            <person name="Feldpausch M."/>
            <person name="Lamberth S."/>
            <person name="Van den Daele H."/>
            <person name="De Keyser A."/>
            <person name="Buysshaert C."/>
            <person name="Gielen J."/>
            <person name="Villarroel R."/>
            <person name="De Clercq R."/>
            <person name="van Montagu M."/>
            <person name="Rogers J."/>
            <person name="Cronin A."/>
            <person name="Quail M.A."/>
            <person name="Bray-Allen S."/>
            <person name="Clark L."/>
            <person name="Doggett J."/>
            <person name="Hall S."/>
            <person name="Kay M."/>
            <person name="Lennard N."/>
            <person name="McLay K."/>
            <person name="Mayes R."/>
            <person name="Pettett A."/>
            <person name="Rajandream M.A."/>
            <person name="Lyne M."/>
            <person name="Benes V."/>
            <person name="Rechmann S."/>
            <person name="Borkova D."/>
            <person name="Bloecker H."/>
            <person name="Scharfe M."/>
            <person name="Grimm M."/>
            <person name="Loehnert T.-H."/>
            <person name="Dose S."/>
            <person name="de Haan M."/>
            <person name="Maarse A.C."/>
            <person name="Schaefer M."/>
            <person name="Mueller-Auer S."/>
            <person name="Gabel C."/>
            <person name="Fuchs M."/>
            <person name="Fartmann B."/>
            <person name="Granderath K."/>
            <person name="Dauner D."/>
            <person name="Herzl A."/>
            <person name="Neumann S."/>
            <person name="Argiriou A."/>
            <person name="Vitale D."/>
            <person name="Liguori R."/>
            <person name="Piravandi E."/>
            <person name="Massenet O."/>
            <person name="Quigley F."/>
            <person name="Clabauld G."/>
            <person name="Muendlein A."/>
            <person name="Felber R."/>
            <person name="Schnabl S."/>
            <person name="Hiller R."/>
            <person name="Schmidt W."/>
            <person name="Lecharny A."/>
            <person name="Aubourg S."/>
            <person name="Chefdor F."/>
            <person name="Cooke R."/>
            <person name="Berger C."/>
            <person name="Monfort A."/>
            <person name="Casacuberta E."/>
            <person name="Gibbons T."/>
            <person name="Weber N."/>
            <person name="Vandenbol M."/>
            <person name="Bargues M."/>
            <person name="Terol J."/>
            <person name="Torres A."/>
            <person name="Perez-Perez A."/>
            <person name="Purnelle B."/>
            <person name="Bent E."/>
            <person name="Johnson S."/>
            <person name="Tacon D."/>
            <person name="Jesse T."/>
            <person name="Heijnen L."/>
            <person name="Schwarz S."/>
            <person name="Scholler P."/>
            <person name="Heber S."/>
            <person name="Francs P."/>
            <person name="Bielke C."/>
            <person name="Frishman D."/>
            <person name="Haase D."/>
            <person name="Lemcke K."/>
            <person name="Mewes H.-W."/>
            <person name="Stocker S."/>
            <person name="Zaccaria P."/>
            <person name="Bevan M."/>
            <person name="Wilson R.K."/>
            <person name="de la Bastide M."/>
            <person name="Habermann K."/>
            <person name="Parnell L."/>
            <person name="Dedhia N."/>
            <person name="Gnoj L."/>
            <person name="Schutz K."/>
            <person name="Huang E."/>
            <person name="Spiegel L."/>
            <person name="Sekhon M."/>
            <person name="Murray J."/>
            <person name="Sheet P."/>
            <person name="Cordes M."/>
            <person name="Abu-Threideh J."/>
            <person name="Stoneking T."/>
            <person name="Kalicki J."/>
            <person name="Graves T."/>
            <person name="Harmon G."/>
            <person name="Edwards J."/>
            <person name="Latreille P."/>
            <person name="Courtney L."/>
            <person name="Cloud J."/>
            <person name="Abbott A."/>
            <person name="Scott K."/>
            <person name="Johnson D."/>
            <person name="Minx P."/>
            <person name="Bentley D."/>
            <person name="Fulton B."/>
            <person name="Miller N."/>
            <person name="Greco T."/>
            <person name="Kemp K."/>
            <person name="Kramer J."/>
            <person name="Fulton L."/>
            <person name="Mardis E."/>
            <person name="Dante M."/>
            <person name="Pepin K."/>
            <person name="Hillier L.W."/>
            <person name="Nelson J."/>
            <person name="Spieth J."/>
            <person name="Ryan E."/>
            <person name="Andrews S."/>
            <person name="Geisel C."/>
            <person name="Layman D."/>
            <person name="Du H."/>
            <person name="Ali J."/>
            <person name="Berghoff A."/>
            <person name="Jones K."/>
            <person name="Drone K."/>
            <person name="Cotton M."/>
            <person name="Joshu C."/>
            <person name="Antonoiu B."/>
            <person name="Zidanic M."/>
            <person name="Strong C."/>
            <person name="Sun H."/>
            <person name="Lamar B."/>
            <person name="Yordan C."/>
            <person name="Ma P."/>
            <person name="Zhong J."/>
            <person name="Preston R."/>
            <person name="Vil D."/>
            <person name="Shekher M."/>
            <person name="Matero A."/>
            <person name="Shah R."/>
            <person name="Swaby I.K."/>
            <person name="O'Shaughnessy A."/>
            <person name="Rodriguez M."/>
            <person name="Hoffman J."/>
            <person name="Till S."/>
            <person name="Granat S."/>
            <person name="Shohdy N."/>
            <person name="Hasegawa A."/>
            <person name="Hameed A."/>
            <person name="Lodhi M."/>
            <person name="Johnson A."/>
            <person name="Chen E."/>
            <person name="Marra M.A."/>
            <person name="Martienssen R."/>
            <person name="McCombie W.R."/>
        </authorList>
    </citation>
    <scope>NUCLEOTIDE SEQUENCE [LARGE SCALE GENOMIC DNA]</scope>
    <source>
        <strain>cv. Columbia</strain>
    </source>
</reference>
<reference key="2">
    <citation type="journal article" date="2017" name="Plant J.">
        <title>Araport11: a complete reannotation of the Arabidopsis thaliana reference genome.</title>
        <authorList>
            <person name="Cheng C.Y."/>
            <person name="Krishnakumar V."/>
            <person name="Chan A.P."/>
            <person name="Thibaud-Nissen F."/>
            <person name="Schobel S."/>
            <person name="Town C.D."/>
        </authorList>
    </citation>
    <scope>GENOME REANNOTATION</scope>
    <source>
        <strain>cv. Columbia</strain>
    </source>
</reference>
<reference key="3">
    <citation type="submission" date="2006-07" db="EMBL/GenBank/DDBJ databases">
        <title>Large-scale analysis of RIKEN Arabidopsis full-length (RAFL) cDNAs.</title>
        <authorList>
            <person name="Totoki Y."/>
            <person name="Seki M."/>
            <person name="Ishida J."/>
            <person name="Nakajima M."/>
            <person name="Enju A."/>
            <person name="Kamiya A."/>
            <person name="Narusaka M."/>
            <person name="Shin-i T."/>
            <person name="Nakagawa M."/>
            <person name="Sakamoto N."/>
            <person name="Oishi K."/>
            <person name="Kohara Y."/>
            <person name="Kobayashi M."/>
            <person name="Toyoda A."/>
            <person name="Sakaki Y."/>
            <person name="Sakurai T."/>
            <person name="Iida K."/>
            <person name="Akiyama K."/>
            <person name="Satou M."/>
            <person name="Toyoda T."/>
            <person name="Konagaya A."/>
            <person name="Carninci P."/>
            <person name="Kawai J."/>
            <person name="Hayashizaki Y."/>
            <person name="Shinozaki K."/>
        </authorList>
    </citation>
    <scope>NUCLEOTIDE SEQUENCE [LARGE SCALE MRNA] (ISOFORM 2)</scope>
    <source>
        <strain>cv. Columbia</strain>
    </source>
</reference>
<reference key="4">
    <citation type="journal article" date="2001" name="Plant Physiol.">
        <title>A superfamily of proteins with novel cysteine-rich repeats.</title>
        <authorList>
            <person name="Chen Z."/>
        </authorList>
    </citation>
    <scope>GENE FAMILY ORGANIZATION</scope>
    <scope>NOMENCLATURE</scope>
</reference>
<name>CRK26_ARATH</name>
<proteinExistence type="evidence at transcript level"/>
<comment type="catalytic activity">
    <reaction>
        <text>L-seryl-[protein] + ATP = O-phospho-L-seryl-[protein] + ADP + H(+)</text>
        <dbReference type="Rhea" id="RHEA:17989"/>
        <dbReference type="Rhea" id="RHEA-COMP:9863"/>
        <dbReference type="Rhea" id="RHEA-COMP:11604"/>
        <dbReference type="ChEBI" id="CHEBI:15378"/>
        <dbReference type="ChEBI" id="CHEBI:29999"/>
        <dbReference type="ChEBI" id="CHEBI:30616"/>
        <dbReference type="ChEBI" id="CHEBI:83421"/>
        <dbReference type="ChEBI" id="CHEBI:456216"/>
    </reaction>
</comment>
<comment type="catalytic activity">
    <reaction>
        <text>L-threonyl-[protein] + ATP = O-phospho-L-threonyl-[protein] + ADP + H(+)</text>
        <dbReference type="Rhea" id="RHEA:46608"/>
        <dbReference type="Rhea" id="RHEA-COMP:11060"/>
        <dbReference type="Rhea" id="RHEA-COMP:11605"/>
        <dbReference type="ChEBI" id="CHEBI:15378"/>
        <dbReference type="ChEBI" id="CHEBI:30013"/>
        <dbReference type="ChEBI" id="CHEBI:30616"/>
        <dbReference type="ChEBI" id="CHEBI:61977"/>
        <dbReference type="ChEBI" id="CHEBI:456216"/>
    </reaction>
</comment>
<comment type="subcellular location">
    <subcellularLocation>
        <location evidence="8">Membrane</location>
        <topology evidence="8">Single-pass membrane protein</topology>
    </subcellularLocation>
</comment>
<comment type="alternative products">
    <event type="alternative splicing"/>
    <isoform>
        <id>Q9T0J1-1</id>
        <name>1</name>
        <sequence type="displayed"/>
    </isoform>
    <isoform>
        <id>Q9T0J1-2</id>
        <name>2</name>
        <sequence type="described" ref="VSP_026696 VSP_026697"/>
    </isoform>
</comment>
<comment type="miscellaneous">
    <molecule>Isoform 2</molecule>
    <text evidence="8">May be due to intron retention.</text>
</comment>
<comment type="similarity">
    <text evidence="3">Belongs to the protein kinase superfamily. Ser/Thr protein kinase family. CRK subfamily.</text>
</comment>
<evidence type="ECO:0000250" key="1">
    <source>
        <dbReference type="UniProtKB" id="O48814"/>
    </source>
</evidence>
<evidence type="ECO:0000255" key="2"/>
<evidence type="ECO:0000255" key="3">
    <source>
        <dbReference type="PROSITE-ProRule" id="PRU00159"/>
    </source>
</evidence>
<evidence type="ECO:0000255" key="4">
    <source>
        <dbReference type="PROSITE-ProRule" id="PRU00806"/>
    </source>
</evidence>
<evidence type="ECO:0000255" key="5">
    <source>
        <dbReference type="PROSITE-ProRule" id="PRU10027"/>
    </source>
</evidence>
<evidence type="ECO:0000256" key="6">
    <source>
        <dbReference type="SAM" id="MobiDB-lite"/>
    </source>
</evidence>
<evidence type="ECO:0000303" key="7">
    <source ref="3"/>
</evidence>
<evidence type="ECO:0000305" key="8"/>
<accession>Q9T0J1</accession>
<accession>Q0WS58</accession>
<gene>
    <name type="primary">CRK26</name>
    <name type="ordered locus">At4g38830</name>
    <name type="ORF">T9A14.110</name>
</gene>
<protein>
    <recommendedName>
        <fullName>Cysteine-rich receptor-like protein kinase 26</fullName>
        <shortName>Cysteine-rich RLK26</shortName>
        <ecNumber>2.7.11.-</ecNumber>
    </recommendedName>
</protein>
<keyword id="KW-0025">Alternative splicing</keyword>
<keyword id="KW-0067">ATP-binding</keyword>
<keyword id="KW-0325">Glycoprotein</keyword>
<keyword id="KW-0418">Kinase</keyword>
<keyword id="KW-0472">Membrane</keyword>
<keyword id="KW-0547">Nucleotide-binding</keyword>
<keyword id="KW-0597">Phosphoprotein</keyword>
<keyword id="KW-0675">Receptor</keyword>
<keyword id="KW-1185">Reference proteome</keyword>
<keyword id="KW-0677">Repeat</keyword>
<keyword id="KW-0723">Serine/threonine-protein kinase</keyword>
<keyword id="KW-0732">Signal</keyword>
<keyword id="KW-0808">Transferase</keyword>
<keyword id="KW-0812">Transmembrane</keyword>
<keyword id="KW-1133">Transmembrane helix</keyword>
<organism>
    <name type="scientific">Arabidopsis thaliana</name>
    <name type="common">Mouse-ear cress</name>
    <dbReference type="NCBI Taxonomy" id="3702"/>
    <lineage>
        <taxon>Eukaryota</taxon>
        <taxon>Viridiplantae</taxon>
        <taxon>Streptophyta</taxon>
        <taxon>Embryophyta</taxon>
        <taxon>Tracheophyta</taxon>
        <taxon>Spermatophyta</taxon>
        <taxon>Magnoliopsida</taxon>
        <taxon>eudicotyledons</taxon>
        <taxon>Gunneridae</taxon>
        <taxon>Pentapetalae</taxon>
        <taxon>rosids</taxon>
        <taxon>malvids</taxon>
        <taxon>Brassicales</taxon>
        <taxon>Brassicaceae</taxon>
        <taxon>Camelineae</taxon>
        <taxon>Arabidopsis</taxon>
    </lineage>
</organism>
<sequence>MLSLLLPLISLLFQIQCFTVKSQPVPLNQICSNVTGNFTVNTPYAVNLDRLISSLSSLRRNVNGFYNISVGDSDEKVNSISQCRGDVKLEVCINCIAMAGKRLVTLCPVQKEAIIWYDKCTFRYSNRTIFNRLEISPHTSITGTRNFTGDRDSWEKSLRGLLEGLKNRASVIGRSKKNFVVGETSGPSFQTLFGLVQCTPDISEEDCSYCLSQGIAKIPSCCDMKMGSYVMSPSCMLAYAPWRFYDPVDTDDPSSVPATPSRPPKNETRSVTQGDKNRGVPKALIFASASVAIVVLFIVLLVVFLKLRRKENIRNSENKHENENISTDSMKFDFSVLQDATSHFSLENKLGEGGFGAVYKGVLSDGQKIAVKRLSKNAQQGETEFKNEFLLVAKLQHRNLVKLLGYSIEGTERLLVYEFLPHTSLDKFIFDPIQGNELEWEIRYKIIGGVARGLLYLHQDSRLRIIHRDLKASNILLDEEMTPKIADFGMARLFDIDHTTQRYTNRIVGTFGYMAPEYVMHGQFSFKTDVYSFGVLVLEIISGKKNSGFSSEDSMGDLISFAWRNWKEGVALNLVDKILMTMSSYSSNMIMRCINIGLLCVQEKVAERPSMASVVLMLDGHTIALSEPSKPAFFSHSNAVSDSSSSLGHNAKTSNYNSNTELYPR</sequence>
<feature type="signal peptide" evidence="2">
    <location>
        <begin position="1"/>
        <end position="22"/>
    </location>
</feature>
<feature type="chain" id="PRO_0000295073" description="Cysteine-rich receptor-like protein kinase 26">
    <location>
        <begin position="23"/>
        <end position="665"/>
    </location>
</feature>
<feature type="topological domain" description="Extracellular" evidence="2">
    <location>
        <begin position="23"/>
        <end position="283"/>
    </location>
</feature>
<feature type="transmembrane region" description="Helical" evidence="2">
    <location>
        <begin position="284"/>
        <end position="304"/>
    </location>
</feature>
<feature type="topological domain" description="Cytoplasmic" evidence="2">
    <location>
        <begin position="305"/>
        <end position="665"/>
    </location>
</feature>
<feature type="domain" description="Gnk2-homologous 1" evidence="4">
    <location>
        <begin position="26"/>
        <end position="129"/>
    </location>
</feature>
<feature type="domain" description="Gnk2-homologous 2" evidence="4">
    <location>
        <begin position="135"/>
        <end position="244"/>
    </location>
</feature>
<feature type="domain" description="Protein kinase" evidence="3">
    <location>
        <begin position="344"/>
        <end position="624"/>
    </location>
</feature>
<feature type="region of interest" description="Disordered" evidence="6">
    <location>
        <begin position="251"/>
        <end position="275"/>
    </location>
</feature>
<feature type="region of interest" description="Disordered" evidence="6">
    <location>
        <begin position="641"/>
        <end position="665"/>
    </location>
</feature>
<feature type="compositionally biased region" description="Polar residues" evidence="6">
    <location>
        <begin position="647"/>
        <end position="665"/>
    </location>
</feature>
<feature type="active site" description="Proton acceptor" evidence="3 5">
    <location>
        <position position="469"/>
    </location>
</feature>
<feature type="binding site" evidence="3">
    <location>
        <begin position="350"/>
        <end position="358"/>
    </location>
    <ligand>
        <name>ATP</name>
        <dbReference type="ChEBI" id="CHEBI:30616"/>
    </ligand>
</feature>
<feature type="binding site" evidence="3">
    <location>
        <position position="372"/>
    </location>
    <ligand>
        <name>ATP</name>
        <dbReference type="ChEBI" id="CHEBI:30616"/>
    </ligand>
</feature>
<feature type="modified residue" description="Phosphotyrosine" evidence="1">
    <location>
        <position position="417"/>
    </location>
</feature>
<feature type="modified residue" description="Phosphoserine" evidence="1">
    <location>
        <position position="473"/>
    </location>
</feature>
<feature type="modified residue" description="Phosphothreonine" evidence="1">
    <location>
        <position position="510"/>
    </location>
</feature>
<feature type="modified residue" description="Phosphotyrosine" evidence="1">
    <location>
        <position position="518"/>
    </location>
</feature>
<feature type="glycosylation site" description="N-linked (GlcNAc...) asparagine" evidence="2">
    <location>
        <position position="33"/>
    </location>
</feature>
<feature type="glycosylation site" description="N-linked (GlcNAc...) asparagine" evidence="2">
    <location>
        <position position="37"/>
    </location>
</feature>
<feature type="glycosylation site" description="N-linked (GlcNAc...) asparagine" evidence="2">
    <location>
        <position position="67"/>
    </location>
</feature>
<feature type="glycosylation site" description="N-linked (GlcNAc...) asparagine" evidence="2">
    <location>
        <position position="126"/>
    </location>
</feature>
<feature type="glycosylation site" description="N-linked (GlcNAc...) asparagine" evidence="2">
    <location>
        <position position="146"/>
    </location>
</feature>
<feature type="glycosylation site" description="N-linked (GlcNAc...) asparagine" evidence="2">
    <location>
        <position position="266"/>
    </location>
</feature>
<feature type="splice variant" id="VSP_026696" description="In isoform 2." evidence="7">
    <location>
        <begin position="1"/>
        <end position="312"/>
    </location>
</feature>
<feature type="splice variant" id="VSP_026697" description="In isoform 2." evidence="7">
    <original>IRNSENKHEN</original>
    <variation>MVYLISLLTD</variation>
    <location>
        <begin position="313"/>
        <end position="322"/>
    </location>
</feature>
<dbReference type="EC" id="2.7.11.-"/>
<dbReference type="EMBL" id="AL035656">
    <property type="protein sequence ID" value="CAB38617.1"/>
    <property type="molecule type" value="Genomic_DNA"/>
</dbReference>
<dbReference type="EMBL" id="AL161594">
    <property type="protein sequence ID" value="CAB80546.1"/>
    <property type="molecule type" value="Genomic_DNA"/>
</dbReference>
<dbReference type="EMBL" id="CP002687">
    <property type="protein sequence ID" value="AEE86981.1"/>
    <property type="molecule type" value="Genomic_DNA"/>
</dbReference>
<dbReference type="EMBL" id="AK228082">
    <property type="protein sequence ID" value="BAF00041.1"/>
    <property type="molecule type" value="mRNA"/>
</dbReference>
<dbReference type="PIR" id="T06082">
    <property type="entry name" value="T06082"/>
</dbReference>
<dbReference type="RefSeq" id="NP_195594.1">
    <molecule id="Q9T0J1-1"/>
    <property type="nucleotide sequence ID" value="NM_120043.3"/>
</dbReference>
<dbReference type="SMR" id="Q9T0J1"/>
<dbReference type="BioGRID" id="15318">
    <property type="interactions" value="2"/>
</dbReference>
<dbReference type="FunCoup" id="Q9T0J1">
    <property type="interactions" value="96"/>
</dbReference>
<dbReference type="IntAct" id="Q9T0J1">
    <property type="interactions" value="2"/>
</dbReference>
<dbReference type="STRING" id="3702.Q9T0J1"/>
<dbReference type="GlyCosmos" id="Q9T0J1">
    <property type="glycosylation" value="6 sites, No reported glycans"/>
</dbReference>
<dbReference type="GlyGen" id="Q9T0J1">
    <property type="glycosylation" value="7 sites"/>
</dbReference>
<dbReference type="iPTMnet" id="Q9T0J1"/>
<dbReference type="PaxDb" id="3702-AT4G38830.1"/>
<dbReference type="ProteomicsDB" id="220453">
    <molecule id="Q9T0J1-1"/>
</dbReference>
<dbReference type="EnsemblPlants" id="AT4G38830.1">
    <molecule id="Q9T0J1-1"/>
    <property type="protein sequence ID" value="AT4G38830.1"/>
    <property type="gene ID" value="AT4G38830"/>
</dbReference>
<dbReference type="GeneID" id="830038"/>
<dbReference type="Gramene" id="AT4G38830.1">
    <molecule id="Q9T0J1-1"/>
    <property type="protein sequence ID" value="AT4G38830.1"/>
    <property type="gene ID" value="AT4G38830"/>
</dbReference>
<dbReference type="KEGG" id="ath:AT4G38830"/>
<dbReference type="Araport" id="AT4G38830"/>
<dbReference type="TAIR" id="AT4G38830">
    <property type="gene designation" value="CRK26"/>
</dbReference>
<dbReference type="eggNOG" id="ENOG502QWDY">
    <property type="taxonomic scope" value="Eukaryota"/>
</dbReference>
<dbReference type="HOGENOM" id="CLU_000288_35_2_1"/>
<dbReference type="InParanoid" id="Q9T0J1"/>
<dbReference type="OMA" id="CFFFRVK"/>
<dbReference type="PhylomeDB" id="Q9T0J1"/>
<dbReference type="PRO" id="PR:Q9T0J1"/>
<dbReference type="Proteomes" id="UP000006548">
    <property type="component" value="Chromosome 4"/>
</dbReference>
<dbReference type="ExpressionAtlas" id="Q9T0J1">
    <property type="expression patterns" value="baseline and differential"/>
</dbReference>
<dbReference type="GO" id="GO:0016020">
    <property type="term" value="C:membrane"/>
    <property type="evidence" value="ECO:0007669"/>
    <property type="project" value="UniProtKB-SubCell"/>
</dbReference>
<dbReference type="GO" id="GO:0005524">
    <property type="term" value="F:ATP binding"/>
    <property type="evidence" value="ECO:0007669"/>
    <property type="project" value="UniProtKB-KW"/>
</dbReference>
<dbReference type="GO" id="GO:0106310">
    <property type="term" value="F:protein serine kinase activity"/>
    <property type="evidence" value="ECO:0007669"/>
    <property type="project" value="RHEA"/>
</dbReference>
<dbReference type="GO" id="GO:0004674">
    <property type="term" value="F:protein serine/threonine kinase activity"/>
    <property type="evidence" value="ECO:0007669"/>
    <property type="project" value="UniProtKB-KW"/>
</dbReference>
<dbReference type="CDD" id="cd23509">
    <property type="entry name" value="Gnk2-like"/>
    <property type="match status" value="2"/>
</dbReference>
<dbReference type="CDD" id="cd14066">
    <property type="entry name" value="STKc_IRAK"/>
    <property type="match status" value="1"/>
</dbReference>
<dbReference type="FunFam" id="3.30.200.20:FF:000142">
    <property type="entry name" value="Cysteine-rich receptor-like protein kinase 10"/>
    <property type="match status" value="1"/>
</dbReference>
<dbReference type="FunFam" id="3.30.430.20:FF:000002">
    <property type="entry name" value="Cysteine-rich receptor-like protein kinase 10"/>
    <property type="match status" value="1"/>
</dbReference>
<dbReference type="FunFam" id="1.10.510.10:FF:000343">
    <property type="entry name" value="Cysteine-rich receptor-like protein kinase 28"/>
    <property type="match status" value="1"/>
</dbReference>
<dbReference type="FunFam" id="3.30.430.20:FF:000009">
    <property type="entry name" value="Cysteine-rich receptor-like protein kinase 28"/>
    <property type="match status" value="1"/>
</dbReference>
<dbReference type="Gene3D" id="3.30.430.20">
    <property type="entry name" value="Gnk2 domain, C-X8-C-X2-C motif"/>
    <property type="match status" value="2"/>
</dbReference>
<dbReference type="Gene3D" id="3.30.200.20">
    <property type="entry name" value="Phosphorylase Kinase, domain 1"/>
    <property type="match status" value="1"/>
</dbReference>
<dbReference type="Gene3D" id="1.10.510.10">
    <property type="entry name" value="Transferase(Phosphotransferase) domain 1"/>
    <property type="match status" value="1"/>
</dbReference>
<dbReference type="InterPro" id="IPR002902">
    <property type="entry name" value="GNK2"/>
</dbReference>
<dbReference type="InterPro" id="IPR038408">
    <property type="entry name" value="GNK2_sf"/>
</dbReference>
<dbReference type="InterPro" id="IPR011009">
    <property type="entry name" value="Kinase-like_dom_sf"/>
</dbReference>
<dbReference type="InterPro" id="IPR000719">
    <property type="entry name" value="Prot_kinase_dom"/>
</dbReference>
<dbReference type="InterPro" id="IPR017441">
    <property type="entry name" value="Protein_kinase_ATP_BS"/>
</dbReference>
<dbReference type="InterPro" id="IPR001245">
    <property type="entry name" value="Ser-Thr/Tyr_kinase_cat_dom"/>
</dbReference>
<dbReference type="InterPro" id="IPR008271">
    <property type="entry name" value="Ser/Thr_kinase_AS"/>
</dbReference>
<dbReference type="PANTHER" id="PTHR27002:SF960">
    <property type="entry name" value="CYSTEINE-RICH RECEPTOR-LIKE PROTEIN KINASE 26"/>
    <property type="match status" value="1"/>
</dbReference>
<dbReference type="PANTHER" id="PTHR27002">
    <property type="entry name" value="RECEPTOR-LIKE SERINE/THREONINE-PROTEIN KINASE SD1-8"/>
    <property type="match status" value="1"/>
</dbReference>
<dbReference type="Pfam" id="PF07714">
    <property type="entry name" value="PK_Tyr_Ser-Thr"/>
    <property type="match status" value="1"/>
</dbReference>
<dbReference type="Pfam" id="PF01657">
    <property type="entry name" value="Stress-antifung"/>
    <property type="match status" value="2"/>
</dbReference>
<dbReference type="SMART" id="SM00220">
    <property type="entry name" value="S_TKc"/>
    <property type="match status" value="1"/>
</dbReference>
<dbReference type="SUPFAM" id="SSF56112">
    <property type="entry name" value="Protein kinase-like (PK-like)"/>
    <property type="match status" value="1"/>
</dbReference>
<dbReference type="PROSITE" id="PS51473">
    <property type="entry name" value="GNK2"/>
    <property type="match status" value="2"/>
</dbReference>
<dbReference type="PROSITE" id="PS00107">
    <property type="entry name" value="PROTEIN_KINASE_ATP"/>
    <property type="match status" value="1"/>
</dbReference>
<dbReference type="PROSITE" id="PS50011">
    <property type="entry name" value="PROTEIN_KINASE_DOM"/>
    <property type="match status" value="1"/>
</dbReference>
<dbReference type="PROSITE" id="PS00108">
    <property type="entry name" value="PROTEIN_KINASE_ST"/>
    <property type="match status" value="1"/>
</dbReference>